<feature type="chain" id="PRO_1000009937" description="Uracil-DNA glycosylase">
    <location>
        <begin position="1"/>
        <end position="229"/>
    </location>
</feature>
<feature type="active site" description="Proton acceptor" evidence="1">
    <location>
        <position position="64"/>
    </location>
</feature>
<proteinExistence type="inferred from homology"/>
<keyword id="KW-0963">Cytoplasm</keyword>
<keyword id="KW-0227">DNA damage</keyword>
<keyword id="KW-0234">DNA repair</keyword>
<keyword id="KW-0378">Hydrolase</keyword>
<sequence>MANELTWHDVLAEEKQQPYFLNTLQTVASERQSGVTIYPPQKDVFNAFRFTELGDVKVVILGQDPYHGPGQAHGLAFSVRPGIAIPPSLLNMYKELENTIPGFTRPNHGYLESWARQGVLLLNTVLTVRAGQAHSHASLGWETFTDKVISLINQHREGVVFLLWGSHAQKKGAIIDKQRHHVLKAPHPSPLSAHRGFFGCNHFVLANQWLEQRGETPIDWMPVLPAESE</sequence>
<gene>
    <name evidence="1" type="primary">ung</name>
    <name type="ordered locus">SBO_2612</name>
</gene>
<organism>
    <name type="scientific">Shigella boydii serotype 4 (strain Sb227)</name>
    <dbReference type="NCBI Taxonomy" id="300268"/>
    <lineage>
        <taxon>Bacteria</taxon>
        <taxon>Pseudomonadati</taxon>
        <taxon>Pseudomonadota</taxon>
        <taxon>Gammaproteobacteria</taxon>
        <taxon>Enterobacterales</taxon>
        <taxon>Enterobacteriaceae</taxon>
        <taxon>Shigella</taxon>
    </lineage>
</organism>
<reference key="1">
    <citation type="journal article" date="2005" name="Nucleic Acids Res.">
        <title>Genome dynamics and diversity of Shigella species, the etiologic agents of bacillary dysentery.</title>
        <authorList>
            <person name="Yang F."/>
            <person name="Yang J."/>
            <person name="Zhang X."/>
            <person name="Chen L."/>
            <person name="Jiang Y."/>
            <person name="Yan Y."/>
            <person name="Tang X."/>
            <person name="Wang J."/>
            <person name="Xiong Z."/>
            <person name="Dong J."/>
            <person name="Xue Y."/>
            <person name="Zhu Y."/>
            <person name="Xu X."/>
            <person name="Sun L."/>
            <person name="Chen S."/>
            <person name="Nie H."/>
            <person name="Peng J."/>
            <person name="Xu J."/>
            <person name="Wang Y."/>
            <person name="Yuan Z."/>
            <person name="Wen Y."/>
            <person name="Yao Z."/>
            <person name="Shen Y."/>
            <person name="Qiang B."/>
            <person name="Hou Y."/>
            <person name="Yu J."/>
            <person name="Jin Q."/>
        </authorList>
    </citation>
    <scope>NUCLEOTIDE SEQUENCE [LARGE SCALE GENOMIC DNA]</scope>
    <source>
        <strain>Sb227</strain>
    </source>
</reference>
<name>UNG_SHIBS</name>
<accession>Q31XQ4</accession>
<protein>
    <recommendedName>
        <fullName evidence="1">Uracil-DNA glycosylase</fullName>
        <shortName evidence="1">UDG</shortName>
        <ecNumber evidence="1">3.2.2.27</ecNumber>
    </recommendedName>
</protein>
<comment type="function">
    <text evidence="1">Excises uracil residues from the DNA which can arise as a result of misincorporation of dUMP residues by DNA polymerase or due to deamination of cytosine.</text>
</comment>
<comment type="catalytic activity">
    <reaction evidence="1">
        <text>Hydrolyzes single-stranded DNA or mismatched double-stranded DNA and polynucleotides, releasing free uracil.</text>
        <dbReference type="EC" id="3.2.2.27"/>
    </reaction>
</comment>
<comment type="subcellular location">
    <subcellularLocation>
        <location evidence="1">Cytoplasm</location>
    </subcellularLocation>
</comment>
<comment type="similarity">
    <text evidence="1">Belongs to the uracil-DNA glycosylase (UDG) superfamily. UNG family.</text>
</comment>
<evidence type="ECO:0000255" key="1">
    <source>
        <dbReference type="HAMAP-Rule" id="MF_00148"/>
    </source>
</evidence>
<dbReference type="EC" id="3.2.2.27" evidence="1"/>
<dbReference type="EMBL" id="CP000036">
    <property type="protein sequence ID" value="ABB67154.1"/>
    <property type="molecule type" value="Genomic_DNA"/>
</dbReference>
<dbReference type="RefSeq" id="WP_001262716.1">
    <property type="nucleotide sequence ID" value="NC_007613.1"/>
</dbReference>
<dbReference type="SMR" id="Q31XQ4"/>
<dbReference type="GeneID" id="93774506"/>
<dbReference type="KEGG" id="sbo:SBO_2612"/>
<dbReference type="HOGENOM" id="CLU_032162_3_1_6"/>
<dbReference type="Proteomes" id="UP000007067">
    <property type="component" value="Chromosome"/>
</dbReference>
<dbReference type="GO" id="GO:0005737">
    <property type="term" value="C:cytoplasm"/>
    <property type="evidence" value="ECO:0007669"/>
    <property type="project" value="UniProtKB-SubCell"/>
</dbReference>
<dbReference type="GO" id="GO:0004844">
    <property type="term" value="F:uracil DNA N-glycosylase activity"/>
    <property type="evidence" value="ECO:0007669"/>
    <property type="project" value="UniProtKB-UniRule"/>
</dbReference>
<dbReference type="GO" id="GO:0097510">
    <property type="term" value="P:base-excision repair, AP site formation via deaminated base removal"/>
    <property type="evidence" value="ECO:0007669"/>
    <property type="project" value="TreeGrafter"/>
</dbReference>
<dbReference type="CDD" id="cd10027">
    <property type="entry name" value="UDG-F1-like"/>
    <property type="match status" value="1"/>
</dbReference>
<dbReference type="FunFam" id="3.40.470.10:FF:000001">
    <property type="entry name" value="Uracil-DNA glycosylase"/>
    <property type="match status" value="1"/>
</dbReference>
<dbReference type="Gene3D" id="3.40.470.10">
    <property type="entry name" value="Uracil-DNA glycosylase-like domain"/>
    <property type="match status" value="1"/>
</dbReference>
<dbReference type="HAMAP" id="MF_00148">
    <property type="entry name" value="UDG"/>
    <property type="match status" value="1"/>
</dbReference>
<dbReference type="InterPro" id="IPR002043">
    <property type="entry name" value="UDG_fam1"/>
</dbReference>
<dbReference type="InterPro" id="IPR018085">
    <property type="entry name" value="Ura-DNA_Glyclase_AS"/>
</dbReference>
<dbReference type="InterPro" id="IPR005122">
    <property type="entry name" value="Uracil-DNA_glycosylase-like"/>
</dbReference>
<dbReference type="InterPro" id="IPR036895">
    <property type="entry name" value="Uracil-DNA_glycosylase-like_sf"/>
</dbReference>
<dbReference type="NCBIfam" id="NF003588">
    <property type="entry name" value="PRK05254.1-1"/>
    <property type="match status" value="1"/>
</dbReference>
<dbReference type="NCBIfam" id="NF003589">
    <property type="entry name" value="PRK05254.1-2"/>
    <property type="match status" value="1"/>
</dbReference>
<dbReference type="NCBIfam" id="NF003591">
    <property type="entry name" value="PRK05254.1-4"/>
    <property type="match status" value="1"/>
</dbReference>
<dbReference type="NCBIfam" id="NF003592">
    <property type="entry name" value="PRK05254.1-5"/>
    <property type="match status" value="1"/>
</dbReference>
<dbReference type="NCBIfam" id="TIGR00628">
    <property type="entry name" value="ung"/>
    <property type="match status" value="1"/>
</dbReference>
<dbReference type="PANTHER" id="PTHR11264">
    <property type="entry name" value="URACIL-DNA GLYCOSYLASE"/>
    <property type="match status" value="1"/>
</dbReference>
<dbReference type="PANTHER" id="PTHR11264:SF0">
    <property type="entry name" value="URACIL-DNA GLYCOSYLASE"/>
    <property type="match status" value="1"/>
</dbReference>
<dbReference type="Pfam" id="PF03167">
    <property type="entry name" value="UDG"/>
    <property type="match status" value="1"/>
</dbReference>
<dbReference type="SMART" id="SM00986">
    <property type="entry name" value="UDG"/>
    <property type="match status" value="1"/>
</dbReference>
<dbReference type="SMART" id="SM00987">
    <property type="entry name" value="UreE_C"/>
    <property type="match status" value="1"/>
</dbReference>
<dbReference type="SUPFAM" id="SSF52141">
    <property type="entry name" value="Uracil-DNA glycosylase-like"/>
    <property type="match status" value="1"/>
</dbReference>
<dbReference type="PROSITE" id="PS00130">
    <property type="entry name" value="U_DNA_GLYCOSYLASE"/>
    <property type="match status" value="1"/>
</dbReference>